<accession>Q9KM76</accession>
<reference key="1">
    <citation type="journal article" date="2000" name="Nature">
        <title>DNA sequence of both chromosomes of the cholera pathogen Vibrio cholerae.</title>
        <authorList>
            <person name="Heidelberg J.F."/>
            <person name="Eisen J.A."/>
            <person name="Nelson W.C."/>
            <person name="Clayton R.A."/>
            <person name="Gwinn M.L."/>
            <person name="Dodson R.J."/>
            <person name="Haft D.H."/>
            <person name="Hickey E.K."/>
            <person name="Peterson J.D."/>
            <person name="Umayam L.A."/>
            <person name="Gill S.R."/>
            <person name="Nelson K.E."/>
            <person name="Read T.D."/>
            <person name="Tettelin H."/>
            <person name="Richardson D.L."/>
            <person name="Ermolaeva M.D."/>
            <person name="Vamathevan J.J."/>
            <person name="Bass S."/>
            <person name="Qin H."/>
            <person name="Dragoi I."/>
            <person name="Sellers P."/>
            <person name="McDonald L.A."/>
            <person name="Utterback T.R."/>
            <person name="Fleischmann R.D."/>
            <person name="Nierman W.C."/>
            <person name="White O."/>
            <person name="Salzberg S.L."/>
            <person name="Smith H.O."/>
            <person name="Colwell R.R."/>
            <person name="Mekalanos J.J."/>
            <person name="Venter J.C."/>
            <person name="Fraser C.M."/>
        </authorList>
    </citation>
    <scope>NUCLEOTIDE SEQUENCE [LARGE SCALE GENOMIC DNA]</scope>
    <source>
        <strain>ATCC 39315 / El Tor Inaba N16961</strain>
    </source>
</reference>
<name>NRDG_VIBCH</name>
<proteinExistence type="inferred from homology"/>
<sequence>MNYHQYYPIDVVNGPGTRCTLFVSGCVHQCKGCYNQSTWSLSSGHRYTQEMEDKIIADLKDTRIKRRGLSLSGGDPMHPANLSAVLQLVQRVKTECPDKDIWLWTGYTLAELDDSQQALLPYIDVLVDGKFIQEQADPGLEWRGSANQVIHRFTL</sequence>
<organism>
    <name type="scientific">Vibrio cholerae serotype O1 (strain ATCC 39315 / El Tor Inaba N16961)</name>
    <dbReference type="NCBI Taxonomy" id="243277"/>
    <lineage>
        <taxon>Bacteria</taxon>
        <taxon>Pseudomonadati</taxon>
        <taxon>Pseudomonadota</taxon>
        <taxon>Gammaproteobacteria</taxon>
        <taxon>Vibrionales</taxon>
        <taxon>Vibrionaceae</taxon>
        <taxon>Vibrio</taxon>
    </lineage>
</organism>
<gene>
    <name type="primary">nrdG</name>
    <name type="ordered locus">VC_A0512</name>
</gene>
<evidence type="ECO:0000250" key="1">
    <source>
        <dbReference type="UniProtKB" id="P0A9N4"/>
    </source>
</evidence>
<evidence type="ECO:0000250" key="2">
    <source>
        <dbReference type="UniProtKB" id="P0A9N8"/>
    </source>
</evidence>
<evidence type="ECO:0000305" key="3"/>
<protein>
    <recommendedName>
        <fullName evidence="2">Anaerobic ribonucleoside-triphosphate reductase-activating protein</fullName>
        <ecNumber evidence="2">1.97.1.-</ecNumber>
    </recommendedName>
    <alternativeName>
        <fullName evidence="2">Class III anaerobic ribonucleotide reductase small component</fullName>
    </alternativeName>
</protein>
<dbReference type="EC" id="1.97.1.-" evidence="2"/>
<dbReference type="EMBL" id="AE003853">
    <property type="protein sequence ID" value="AAF96415.1"/>
    <property type="molecule type" value="Genomic_DNA"/>
</dbReference>
<dbReference type="PIR" id="E82452">
    <property type="entry name" value="E82452"/>
</dbReference>
<dbReference type="RefSeq" id="NP_232903.1">
    <property type="nucleotide sequence ID" value="NC_002506.1"/>
</dbReference>
<dbReference type="RefSeq" id="WP_001106209.1">
    <property type="nucleotide sequence ID" value="NZ_LT906615.1"/>
</dbReference>
<dbReference type="SMR" id="Q9KM76"/>
<dbReference type="STRING" id="243277.VC_A0512"/>
<dbReference type="DNASU" id="2612588"/>
<dbReference type="EnsemblBacteria" id="AAF96415">
    <property type="protein sequence ID" value="AAF96415"/>
    <property type="gene ID" value="VC_A0512"/>
</dbReference>
<dbReference type="GeneID" id="89512400"/>
<dbReference type="KEGG" id="vch:VC_A0512"/>
<dbReference type="PATRIC" id="fig|243277.26.peg.3138"/>
<dbReference type="eggNOG" id="COG0602">
    <property type="taxonomic scope" value="Bacteria"/>
</dbReference>
<dbReference type="HOGENOM" id="CLU_089926_2_1_6"/>
<dbReference type="Proteomes" id="UP000000584">
    <property type="component" value="Chromosome 2"/>
</dbReference>
<dbReference type="GO" id="GO:0005737">
    <property type="term" value="C:cytoplasm"/>
    <property type="evidence" value="ECO:0007669"/>
    <property type="project" value="UniProtKB-SubCell"/>
</dbReference>
<dbReference type="GO" id="GO:0051539">
    <property type="term" value="F:4 iron, 4 sulfur cluster binding"/>
    <property type="evidence" value="ECO:0007669"/>
    <property type="project" value="UniProtKB-KW"/>
</dbReference>
<dbReference type="GO" id="GO:0043365">
    <property type="term" value="F:[formate-C-acetyltransferase]-activating enzyme activity"/>
    <property type="evidence" value="ECO:0007669"/>
    <property type="project" value="InterPro"/>
</dbReference>
<dbReference type="GO" id="GO:0046872">
    <property type="term" value="F:metal ion binding"/>
    <property type="evidence" value="ECO:0007669"/>
    <property type="project" value="UniProtKB-KW"/>
</dbReference>
<dbReference type="CDD" id="cd01335">
    <property type="entry name" value="Radical_SAM"/>
    <property type="match status" value="1"/>
</dbReference>
<dbReference type="Gene3D" id="3.20.20.70">
    <property type="entry name" value="Aldolase class I"/>
    <property type="match status" value="1"/>
</dbReference>
<dbReference type="InterPro" id="IPR013785">
    <property type="entry name" value="Aldolase_TIM"/>
</dbReference>
<dbReference type="InterPro" id="IPR012837">
    <property type="entry name" value="NrdG"/>
</dbReference>
<dbReference type="InterPro" id="IPR034457">
    <property type="entry name" value="Organic_radical-activating"/>
</dbReference>
<dbReference type="InterPro" id="IPR001989">
    <property type="entry name" value="Radical_activat_CS"/>
</dbReference>
<dbReference type="InterPro" id="IPR007197">
    <property type="entry name" value="rSAM"/>
</dbReference>
<dbReference type="NCBIfam" id="TIGR02491">
    <property type="entry name" value="NrdG"/>
    <property type="match status" value="1"/>
</dbReference>
<dbReference type="NCBIfam" id="NF008335">
    <property type="entry name" value="PRK11121.1"/>
    <property type="match status" value="1"/>
</dbReference>
<dbReference type="PANTHER" id="PTHR30352:SF2">
    <property type="entry name" value="ANAEROBIC RIBONUCLEOSIDE-TRIPHOSPHATE REDUCTASE-ACTIVATING PROTEIN"/>
    <property type="match status" value="1"/>
</dbReference>
<dbReference type="PANTHER" id="PTHR30352">
    <property type="entry name" value="PYRUVATE FORMATE-LYASE-ACTIVATING ENZYME"/>
    <property type="match status" value="1"/>
</dbReference>
<dbReference type="Pfam" id="PF13353">
    <property type="entry name" value="Fer4_12"/>
    <property type="match status" value="1"/>
</dbReference>
<dbReference type="PIRSF" id="PIRSF000368">
    <property type="entry name" value="NrdG"/>
    <property type="match status" value="1"/>
</dbReference>
<dbReference type="SFLD" id="SFLDF00299">
    <property type="entry name" value="anaerobic_ribonucleoside-triph"/>
    <property type="match status" value="1"/>
</dbReference>
<dbReference type="SFLD" id="SFLDS00029">
    <property type="entry name" value="Radical_SAM"/>
    <property type="match status" value="1"/>
</dbReference>
<dbReference type="SUPFAM" id="SSF102114">
    <property type="entry name" value="Radical SAM enzymes"/>
    <property type="match status" value="1"/>
</dbReference>
<dbReference type="PROSITE" id="PS01087">
    <property type="entry name" value="RADICAL_ACTIVATING"/>
    <property type="match status" value="1"/>
</dbReference>
<feature type="chain" id="PRO_0000200541" description="Anaerobic ribonucleoside-triphosphate reductase-activating protein">
    <location>
        <begin position="1"/>
        <end position="155"/>
    </location>
</feature>
<feature type="binding site" evidence="1">
    <location>
        <position position="26"/>
    </location>
    <ligand>
        <name>[4Fe-4S] cluster</name>
        <dbReference type="ChEBI" id="CHEBI:49883"/>
        <note>4Fe-4S-S-AdoMet</note>
    </ligand>
</feature>
<feature type="binding site" evidence="1">
    <location>
        <position position="30"/>
    </location>
    <ligand>
        <name>[4Fe-4S] cluster</name>
        <dbReference type="ChEBI" id="CHEBI:49883"/>
        <note>4Fe-4S-S-AdoMet</note>
    </ligand>
</feature>
<feature type="binding site" evidence="1">
    <location>
        <begin position="32"/>
        <end position="34"/>
    </location>
    <ligand>
        <name>S-adenosyl-L-methionine</name>
        <dbReference type="ChEBI" id="CHEBI:59789"/>
    </ligand>
</feature>
<feature type="binding site" evidence="1">
    <location>
        <position position="33"/>
    </location>
    <ligand>
        <name>[4Fe-4S] cluster</name>
        <dbReference type="ChEBI" id="CHEBI:49883"/>
        <note>4Fe-4S-S-AdoMet</note>
    </ligand>
</feature>
<feature type="binding site" evidence="1">
    <location>
        <position position="74"/>
    </location>
    <ligand>
        <name>S-adenosyl-L-methionine</name>
        <dbReference type="ChEBI" id="CHEBI:59789"/>
    </ligand>
</feature>
<comment type="function">
    <text evidence="2">Activation of anaerobic ribonucleoside-triphosphate reductase under anaerobic conditions by generation of an organic free radical, using S-adenosylmethionine and reduced flavodoxin as cosubstrates to produce 5'-deoxy-adenosine.</text>
</comment>
<comment type="catalytic activity">
    <reaction evidence="2">
        <text>glycyl-[protein] + reduced [flavodoxin] + S-adenosyl-L-methionine = glycin-2-yl radical-[protein] + semiquinone [flavodoxin] + 5'-deoxyadenosine + L-methionine + H(+)</text>
        <dbReference type="Rhea" id="RHEA:61976"/>
        <dbReference type="Rhea" id="RHEA-COMP:10622"/>
        <dbReference type="Rhea" id="RHEA-COMP:14480"/>
        <dbReference type="Rhea" id="RHEA-COMP:15993"/>
        <dbReference type="Rhea" id="RHEA-COMP:15994"/>
        <dbReference type="ChEBI" id="CHEBI:15378"/>
        <dbReference type="ChEBI" id="CHEBI:17319"/>
        <dbReference type="ChEBI" id="CHEBI:29947"/>
        <dbReference type="ChEBI" id="CHEBI:32722"/>
        <dbReference type="ChEBI" id="CHEBI:57618"/>
        <dbReference type="ChEBI" id="CHEBI:57844"/>
        <dbReference type="ChEBI" id="CHEBI:59789"/>
        <dbReference type="ChEBI" id="CHEBI:140311"/>
    </reaction>
</comment>
<comment type="cofactor">
    <cofactor evidence="2">
        <name>[4Fe-4S] cluster</name>
        <dbReference type="ChEBI" id="CHEBI:49883"/>
    </cofactor>
    <text evidence="1">Binds 1 [4Fe-4S] cluster. The cluster is coordinated with 3 cysteines and an exchangeable S-adenosyl-L-methionine.</text>
</comment>
<comment type="subunit">
    <text evidence="2">Forms a tetramer composed of two NrdD and two NrdG subunits.</text>
</comment>
<comment type="subcellular location">
    <subcellularLocation>
        <location evidence="2">Cytoplasm</location>
    </subcellularLocation>
</comment>
<comment type="similarity">
    <text evidence="3">Belongs to the organic radical-activating enzymes family.</text>
</comment>
<keyword id="KW-0004">4Fe-4S</keyword>
<keyword id="KW-0963">Cytoplasm</keyword>
<keyword id="KW-0408">Iron</keyword>
<keyword id="KW-0411">Iron-sulfur</keyword>
<keyword id="KW-0479">Metal-binding</keyword>
<keyword id="KW-0560">Oxidoreductase</keyword>
<keyword id="KW-1185">Reference proteome</keyword>
<keyword id="KW-0949">S-adenosyl-L-methionine</keyword>